<comment type="function">
    <text evidence="3 5 6">Involved in cytokinesis by recruiting INN1 to the bud neck. Cooperates with INN1 to stimulate the synthesis of the primary septum (PS) by CHS2.</text>
</comment>
<comment type="subunit">
    <text evidence="5 6">Interacts with INN1.</text>
</comment>
<comment type="interaction">
    <interactant intactId="EBI-31510">
        <id>Q07533</id>
    </interactant>
    <interactant intactId="EBI-5412">
        <id>Q05080</id>
        <label>HOF1</label>
    </interactant>
    <organismsDiffer>false</organismsDiffer>
    <experiments>5</experiments>
</comment>
<comment type="interaction">
    <interactant intactId="EBI-31510">
        <id>Q07533</id>
    </interactant>
    <interactant intactId="EBI-18140">
        <id>P40073</id>
        <label>SHO1</label>
    </interactant>
    <organismsDiffer>false</organismsDiffer>
    <experiments>4</experiments>
</comment>
<comment type="subcellular location">
    <subcellularLocation>
        <location>Cytoplasm</location>
    </subcellularLocation>
    <subcellularLocation>
        <location>Bud neck</location>
    </subcellularLocation>
    <text>Found in association with the actin ring and the cortex at the mother-bud neck.</text>
</comment>
<comment type="miscellaneous">
    <text evidence="4">Present with 377 molecules/cell in log phase SD medium.</text>
</comment>
<comment type="similarity">
    <text evidence="7">Belongs to the CYK3 family.</text>
</comment>
<protein>
    <recommendedName>
        <fullName>Cytokinesis protein 3</fullName>
    </recommendedName>
</protein>
<sequence>MATNLTSLKPPFKVKARYGWSGQTKGDLGFLEGDIMEVTRIAGSWFYGKLLRNKKCSGYFPHNFVILLEERLNSSTENGRQPSKIVESFEKSNKVVIPPVPSRYSDERPRPKKKLSSSMPNSPKKPVDSLTKARKAKSKEMVNEKNIYNTQSSRHHNNSAPNLPLASHSKPQVRNFEESMNNPLPPLPPLPDLDNMRKTDKRAPKKSYSANDLHMARSSREYNYYKDNQKFYDGFIPEKRYSLEEDSISSGLFSNSQYLNDSACSSENSFALMSDFSATSAGSFARHKYAQSFSDSLQRSQNANGCSTKINDSQEFGDSNASSRNGKMGDILRKIIIPKRNTNIYSSSVSSPKSPKAYPKLPDIQNLNLSATPDEARDWIAVKCHLNRARTLTKYDKHPRYMRALEENRDLILHPQDSIYNGLNTNEVKGNTKPGLVDVELAELNIEYIDKMTWKRCIRDGTMTLDSWAQTTFSARYSTVLEKLRGIYIFCTEMFALTDDNGTSDFSAEPQNLEKILYRKHCTPYELTWLFKKLANSLGITCEIVIGFLKTPSAINWEFKYNHCWLRILVNKEWRFIDVILGNVTNPIHEFVNNRKIKKAENSYFLMAPLEMIYTHIPPREFEQHIVPSIDQLSALYLPLVFPSFFKNELKLYKFSTALSFLEDSEIYECSLEIPNDVEVFASVVIPTDNEEASSAYRNMELALTQIKKQKAESGRRIALIKAVLPPNVNKGSLYIHSGVRGTQTSIANIHPLSMMVPLTHKGSNMKYEFVIKIPSESIQKIELYIVEPQSRYLFVGNEYSFEVIQSPSDGIVYSSDEGPNQNRKQPMAIKSPSGRVHELVKSDPHFPYGTWKGSIKIKEPGVWSALVIADSGIGWSVFAEWLCV</sequence>
<dbReference type="EMBL" id="Z74165">
    <property type="protein sequence ID" value="CAA98685.1"/>
    <property type="molecule type" value="Genomic_DNA"/>
</dbReference>
<dbReference type="EMBL" id="BK006938">
    <property type="protein sequence ID" value="DAA11743.1"/>
    <property type="molecule type" value="Genomic_DNA"/>
</dbReference>
<dbReference type="PIR" id="S67660">
    <property type="entry name" value="S67660"/>
</dbReference>
<dbReference type="RefSeq" id="NP_010166.1">
    <property type="nucleotide sequence ID" value="NM_001180176.1"/>
</dbReference>
<dbReference type="BioGRID" id="31945">
    <property type="interactions" value="364"/>
</dbReference>
<dbReference type="ComplexPortal" id="CPX-1140">
    <property type="entry name" value="HICS complex"/>
</dbReference>
<dbReference type="DIP" id="DIP-6625N"/>
<dbReference type="FunCoup" id="Q07533">
    <property type="interactions" value="103"/>
</dbReference>
<dbReference type="IntAct" id="Q07533">
    <property type="interactions" value="28"/>
</dbReference>
<dbReference type="MINT" id="Q07533"/>
<dbReference type="STRING" id="4932.YDL117W"/>
<dbReference type="iPTMnet" id="Q07533"/>
<dbReference type="PaxDb" id="4932-YDL117W"/>
<dbReference type="PeptideAtlas" id="Q07533"/>
<dbReference type="EnsemblFungi" id="YDL117W_mRNA">
    <property type="protein sequence ID" value="YDL117W"/>
    <property type="gene ID" value="YDL117W"/>
</dbReference>
<dbReference type="GeneID" id="851440"/>
<dbReference type="KEGG" id="sce:YDL117W"/>
<dbReference type="AGR" id="SGD:S000002275"/>
<dbReference type="SGD" id="S000002275">
    <property type="gene designation" value="CYK3"/>
</dbReference>
<dbReference type="VEuPathDB" id="FungiDB:YDL117W"/>
<dbReference type="eggNOG" id="KOG4575">
    <property type="taxonomic scope" value="Eukaryota"/>
</dbReference>
<dbReference type="HOGENOM" id="CLU_008674_1_0_1"/>
<dbReference type="InParanoid" id="Q07533"/>
<dbReference type="OMA" id="CTPYELT"/>
<dbReference type="OrthoDB" id="6129702at2759"/>
<dbReference type="BioCyc" id="YEAST:G3O-29517-MONOMER"/>
<dbReference type="BioGRID-ORCS" id="851440">
    <property type="hits" value="0 hits in 10 CRISPR screens"/>
</dbReference>
<dbReference type="PRO" id="PR:Q07533"/>
<dbReference type="Proteomes" id="UP000002311">
    <property type="component" value="Chromosome IV"/>
</dbReference>
<dbReference type="RNAct" id="Q07533">
    <property type="molecule type" value="protein"/>
</dbReference>
<dbReference type="GO" id="GO:0005935">
    <property type="term" value="C:cellular bud neck"/>
    <property type="evidence" value="ECO:0000314"/>
    <property type="project" value="SGD"/>
</dbReference>
<dbReference type="GO" id="GO:0000142">
    <property type="term" value="C:cellular bud neck contractile ring"/>
    <property type="evidence" value="ECO:0000314"/>
    <property type="project" value="SGD"/>
</dbReference>
<dbReference type="GO" id="GO:0005737">
    <property type="term" value="C:cytoplasm"/>
    <property type="evidence" value="ECO:0007005"/>
    <property type="project" value="SGD"/>
</dbReference>
<dbReference type="GO" id="GO:0044697">
    <property type="term" value="C:HICS complex"/>
    <property type="evidence" value="ECO:0000353"/>
    <property type="project" value="SGD"/>
</dbReference>
<dbReference type="GO" id="GO:0016020">
    <property type="term" value="C:membrane"/>
    <property type="evidence" value="ECO:0000303"/>
    <property type="project" value="ComplexPortal"/>
</dbReference>
<dbReference type="GO" id="GO:0110085">
    <property type="term" value="C:mitotic actomyosin contractile ring"/>
    <property type="evidence" value="ECO:0000318"/>
    <property type="project" value="GO_Central"/>
</dbReference>
<dbReference type="GO" id="GO:0005634">
    <property type="term" value="C:nucleus"/>
    <property type="evidence" value="ECO:0007005"/>
    <property type="project" value="SGD"/>
</dbReference>
<dbReference type="GO" id="GO:0030234">
    <property type="term" value="F:enzyme regulator activity"/>
    <property type="evidence" value="ECO:0000316"/>
    <property type="project" value="SGD"/>
</dbReference>
<dbReference type="GO" id="GO:1902410">
    <property type="term" value="P:mitotic cytokinetic process"/>
    <property type="evidence" value="ECO:0000303"/>
    <property type="project" value="ComplexPortal"/>
</dbReference>
<dbReference type="GO" id="GO:0140278">
    <property type="term" value="P:mitotic division septum assembly"/>
    <property type="evidence" value="ECO:0000318"/>
    <property type="project" value="GO_Central"/>
</dbReference>
<dbReference type="GO" id="GO:1990344">
    <property type="term" value="P:secondary cell septum biogenesis"/>
    <property type="evidence" value="ECO:0000316"/>
    <property type="project" value="SGD"/>
</dbReference>
<dbReference type="Gene3D" id="2.30.30.40">
    <property type="entry name" value="SH3 Domains"/>
    <property type="match status" value="1"/>
</dbReference>
<dbReference type="InterPro" id="IPR052557">
    <property type="entry name" value="CAP/Cytokinesis_protein"/>
</dbReference>
<dbReference type="InterPro" id="IPR056409">
    <property type="entry name" value="Ig_CYK3_C"/>
</dbReference>
<dbReference type="InterPro" id="IPR038765">
    <property type="entry name" value="Papain-like_cys_pep_sf"/>
</dbReference>
<dbReference type="InterPro" id="IPR036028">
    <property type="entry name" value="SH3-like_dom_sf"/>
</dbReference>
<dbReference type="InterPro" id="IPR001452">
    <property type="entry name" value="SH3_domain"/>
</dbReference>
<dbReference type="InterPro" id="IPR002931">
    <property type="entry name" value="Transglutaminase-like"/>
</dbReference>
<dbReference type="PANTHER" id="PTHR46333">
    <property type="entry name" value="CYTOKINESIS PROTEIN 3"/>
    <property type="match status" value="1"/>
</dbReference>
<dbReference type="PANTHER" id="PTHR46333:SF2">
    <property type="entry name" value="CYTOKINESIS PROTEIN 3"/>
    <property type="match status" value="1"/>
</dbReference>
<dbReference type="Pfam" id="PF24584">
    <property type="entry name" value="Ig_CYK3_C"/>
    <property type="match status" value="1"/>
</dbReference>
<dbReference type="SMART" id="SM00326">
    <property type="entry name" value="SH3"/>
    <property type="match status" value="1"/>
</dbReference>
<dbReference type="SMART" id="SM00460">
    <property type="entry name" value="TGc"/>
    <property type="match status" value="1"/>
</dbReference>
<dbReference type="SUPFAM" id="SSF54001">
    <property type="entry name" value="Cysteine proteinases"/>
    <property type="match status" value="1"/>
</dbReference>
<dbReference type="SUPFAM" id="SSF50044">
    <property type="entry name" value="SH3-domain"/>
    <property type="match status" value="1"/>
</dbReference>
<dbReference type="PROSITE" id="PS50002">
    <property type="entry name" value="SH3"/>
    <property type="match status" value="1"/>
</dbReference>
<organism>
    <name type="scientific">Saccharomyces cerevisiae (strain ATCC 204508 / S288c)</name>
    <name type="common">Baker's yeast</name>
    <dbReference type="NCBI Taxonomy" id="559292"/>
    <lineage>
        <taxon>Eukaryota</taxon>
        <taxon>Fungi</taxon>
        <taxon>Dikarya</taxon>
        <taxon>Ascomycota</taxon>
        <taxon>Saccharomycotina</taxon>
        <taxon>Saccharomycetes</taxon>
        <taxon>Saccharomycetales</taxon>
        <taxon>Saccharomycetaceae</taxon>
        <taxon>Saccharomyces</taxon>
    </lineage>
</organism>
<keyword id="KW-0131">Cell cycle</keyword>
<keyword id="KW-0132">Cell division</keyword>
<keyword id="KW-0963">Cytoplasm</keyword>
<keyword id="KW-0597">Phosphoprotein</keyword>
<keyword id="KW-1185">Reference proteome</keyword>
<keyword id="KW-0728">SH3 domain</keyword>
<gene>
    <name type="primary">CYK3</name>
    <name type="ordered locus">YDL117W</name>
</gene>
<proteinExistence type="evidence at protein level"/>
<accession>Q07533</accession>
<accession>D6VRN3</accession>
<feature type="chain" id="PRO_0000079751" description="Cytokinesis protein 3">
    <location>
        <begin position="1"/>
        <end position="885"/>
    </location>
</feature>
<feature type="domain" description="SH3" evidence="1">
    <location>
        <begin position="9"/>
        <end position="70"/>
    </location>
</feature>
<feature type="region of interest" description="Disordered" evidence="2">
    <location>
        <begin position="97"/>
        <end position="209"/>
    </location>
</feature>
<feature type="region of interest" description="Disordered" evidence="2">
    <location>
        <begin position="300"/>
        <end position="325"/>
    </location>
</feature>
<feature type="region of interest" description="Disordered" evidence="2">
    <location>
        <begin position="815"/>
        <end position="835"/>
    </location>
</feature>
<feature type="modified residue" description="Phosphoserine" evidence="9">
    <location>
        <position position="209"/>
    </location>
</feature>
<feature type="modified residue" description="Phosphoserine" evidence="11">
    <location>
        <position position="292"/>
    </location>
</feature>
<feature type="modified residue" description="Phosphoserine" evidence="10 11">
    <location>
        <position position="313"/>
    </location>
</feature>
<feature type="modified residue" description="Phosphoserine" evidence="9">
    <location>
        <position position="354"/>
    </location>
</feature>
<feature type="modified residue" description="Phosphothreonine" evidence="8">
    <location>
        <position position="391"/>
    </location>
</feature>
<evidence type="ECO:0000255" key="1">
    <source>
        <dbReference type="PROSITE-ProRule" id="PRU00192"/>
    </source>
</evidence>
<evidence type="ECO:0000256" key="2">
    <source>
        <dbReference type="SAM" id="MobiDB-lite"/>
    </source>
</evidence>
<evidence type="ECO:0000269" key="3">
    <source>
    </source>
</evidence>
<evidence type="ECO:0000269" key="4">
    <source>
    </source>
</evidence>
<evidence type="ECO:0000269" key="5">
    <source>
    </source>
</evidence>
<evidence type="ECO:0000269" key="6">
    <source>
    </source>
</evidence>
<evidence type="ECO:0000305" key="7"/>
<evidence type="ECO:0007744" key="8">
    <source>
    </source>
</evidence>
<evidence type="ECO:0007744" key="9">
    <source>
    </source>
</evidence>
<evidence type="ECO:0007744" key="10">
    <source>
    </source>
</evidence>
<evidence type="ECO:0007744" key="11">
    <source>
    </source>
</evidence>
<name>CYK3_YEAST</name>
<reference key="1">
    <citation type="journal article" date="1997" name="Nature">
        <title>The nucleotide sequence of Saccharomyces cerevisiae chromosome IV.</title>
        <authorList>
            <person name="Jacq C."/>
            <person name="Alt-Moerbe J."/>
            <person name="Andre B."/>
            <person name="Arnold W."/>
            <person name="Bahr A."/>
            <person name="Ballesta J.P.G."/>
            <person name="Bargues M."/>
            <person name="Baron L."/>
            <person name="Becker A."/>
            <person name="Biteau N."/>
            <person name="Bloecker H."/>
            <person name="Blugeon C."/>
            <person name="Boskovic J."/>
            <person name="Brandt P."/>
            <person name="Brueckner M."/>
            <person name="Buitrago M.J."/>
            <person name="Coster F."/>
            <person name="Delaveau T."/>
            <person name="del Rey F."/>
            <person name="Dujon B."/>
            <person name="Eide L.G."/>
            <person name="Garcia-Cantalejo J.M."/>
            <person name="Goffeau A."/>
            <person name="Gomez-Peris A."/>
            <person name="Granotier C."/>
            <person name="Hanemann V."/>
            <person name="Hankeln T."/>
            <person name="Hoheisel J.D."/>
            <person name="Jaeger W."/>
            <person name="Jimenez A."/>
            <person name="Jonniaux J.-L."/>
            <person name="Kraemer C."/>
            <person name="Kuester H."/>
            <person name="Laamanen P."/>
            <person name="Legros Y."/>
            <person name="Louis E.J."/>
            <person name="Moeller-Rieker S."/>
            <person name="Monnet A."/>
            <person name="Moro M."/>
            <person name="Mueller-Auer S."/>
            <person name="Nussbaumer B."/>
            <person name="Paricio N."/>
            <person name="Paulin L."/>
            <person name="Perea J."/>
            <person name="Perez-Alonso M."/>
            <person name="Perez-Ortin J.E."/>
            <person name="Pohl T.M."/>
            <person name="Prydz H."/>
            <person name="Purnelle B."/>
            <person name="Rasmussen S.W."/>
            <person name="Remacha M.A."/>
            <person name="Revuelta J.L."/>
            <person name="Rieger M."/>
            <person name="Salom D."/>
            <person name="Saluz H.P."/>
            <person name="Saiz J.E."/>
            <person name="Saren A.-M."/>
            <person name="Schaefer M."/>
            <person name="Scharfe M."/>
            <person name="Schmidt E.R."/>
            <person name="Schneider C."/>
            <person name="Scholler P."/>
            <person name="Schwarz S."/>
            <person name="Soler-Mira A."/>
            <person name="Urrestarazu L.A."/>
            <person name="Verhasselt P."/>
            <person name="Vissers S."/>
            <person name="Voet M."/>
            <person name="Volckaert G."/>
            <person name="Wagner G."/>
            <person name="Wambutt R."/>
            <person name="Wedler E."/>
            <person name="Wedler H."/>
            <person name="Woelfl S."/>
            <person name="Harris D.E."/>
            <person name="Bowman S."/>
            <person name="Brown D."/>
            <person name="Churcher C.M."/>
            <person name="Connor R."/>
            <person name="Dedman K."/>
            <person name="Gentles S."/>
            <person name="Hamlin N."/>
            <person name="Hunt S."/>
            <person name="Jones L."/>
            <person name="McDonald S."/>
            <person name="Murphy L.D."/>
            <person name="Niblett D."/>
            <person name="Odell C."/>
            <person name="Oliver K."/>
            <person name="Rajandream M.A."/>
            <person name="Richards C."/>
            <person name="Shore L."/>
            <person name="Walsh S.V."/>
            <person name="Barrell B.G."/>
            <person name="Dietrich F.S."/>
            <person name="Mulligan J.T."/>
            <person name="Allen E."/>
            <person name="Araujo R."/>
            <person name="Aviles E."/>
            <person name="Berno A."/>
            <person name="Carpenter J."/>
            <person name="Chen E."/>
            <person name="Cherry J.M."/>
            <person name="Chung E."/>
            <person name="Duncan M."/>
            <person name="Hunicke-Smith S."/>
            <person name="Hyman R.W."/>
            <person name="Komp C."/>
            <person name="Lashkari D."/>
            <person name="Lew H."/>
            <person name="Lin D."/>
            <person name="Mosedale D."/>
            <person name="Nakahara K."/>
            <person name="Namath A."/>
            <person name="Oefner P."/>
            <person name="Oh C."/>
            <person name="Petel F.X."/>
            <person name="Roberts D."/>
            <person name="Schramm S."/>
            <person name="Schroeder M."/>
            <person name="Shogren T."/>
            <person name="Shroff N."/>
            <person name="Winant A."/>
            <person name="Yelton M.A."/>
            <person name="Botstein D."/>
            <person name="Davis R.W."/>
            <person name="Johnston M."/>
            <person name="Andrews S."/>
            <person name="Brinkman R."/>
            <person name="Cooper J."/>
            <person name="Ding H."/>
            <person name="Du Z."/>
            <person name="Favello A."/>
            <person name="Fulton L."/>
            <person name="Gattung S."/>
            <person name="Greco T."/>
            <person name="Hallsworth K."/>
            <person name="Hawkins J."/>
            <person name="Hillier L.W."/>
            <person name="Jier M."/>
            <person name="Johnson D."/>
            <person name="Johnston L."/>
            <person name="Kirsten J."/>
            <person name="Kucaba T."/>
            <person name="Langston Y."/>
            <person name="Latreille P."/>
            <person name="Le T."/>
            <person name="Mardis E."/>
            <person name="Menezes S."/>
            <person name="Miller N."/>
            <person name="Nhan M."/>
            <person name="Pauley A."/>
            <person name="Peluso D."/>
            <person name="Rifkin L."/>
            <person name="Riles L."/>
            <person name="Taich A."/>
            <person name="Trevaskis E."/>
            <person name="Vignati D."/>
            <person name="Wilcox L."/>
            <person name="Wohldman P."/>
            <person name="Vaudin M."/>
            <person name="Wilson R."/>
            <person name="Waterston R."/>
            <person name="Albermann K."/>
            <person name="Hani J."/>
            <person name="Heumann K."/>
            <person name="Kleine K."/>
            <person name="Mewes H.-W."/>
            <person name="Zollner A."/>
            <person name="Zaccaria P."/>
        </authorList>
    </citation>
    <scope>NUCLEOTIDE SEQUENCE [LARGE SCALE GENOMIC DNA]</scope>
    <source>
        <strain>ATCC 204508 / S288c</strain>
    </source>
</reference>
<reference key="2">
    <citation type="journal article" date="2014" name="G3 (Bethesda)">
        <title>The reference genome sequence of Saccharomyces cerevisiae: Then and now.</title>
        <authorList>
            <person name="Engel S.R."/>
            <person name="Dietrich F.S."/>
            <person name="Fisk D.G."/>
            <person name="Binkley G."/>
            <person name="Balakrishnan R."/>
            <person name="Costanzo M.C."/>
            <person name="Dwight S.S."/>
            <person name="Hitz B.C."/>
            <person name="Karra K."/>
            <person name="Nash R.S."/>
            <person name="Weng S."/>
            <person name="Wong E.D."/>
            <person name="Lloyd P."/>
            <person name="Skrzypek M.S."/>
            <person name="Miyasato S.R."/>
            <person name="Simison M."/>
            <person name="Cherry J.M."/>
        </authorList>
    </citation>
    <scope>GENOME REANNOTATION</scope>
    <source>
        <strain>ATCC 204508 / S288c</strain>
    </source>
</reference>
<reference key="3">
    <citation type="journal article" date="2000" name="Curr. Biol.">
        <title>Cyk3, a novel SH3-domain protein, affects cytokinesis in yeast.</title>
        <authorList>
            <person name="Korinek W.S."/>
            <person name="Bi E."/>
            <person name="Epp J.A."/>
            <person name="Wang L."/>
            <person name="Ho J."/>
            <person name="Chant J."/>
        </authorList>
    </citation>
    <scope>FUNCTION</scope>
    <scope>SUBCELLULAR LOCATION</scope>
</reference>
<reference key="4">
    <citation type="journal article" date="2003" name="Nature">
        <title>Global analysis of protein localization in budding yeast.</title>
        <authorList>
            <person name="Huh W.-K."/>
            <person name="Falvo J.V."/>
            <person name="Gerke L.C."/>
            <person name="Carroll A.S."/>
            <person name="Howson R.W."/>
            <person name="Weissman J.S."/>
            <person name="O'Shea E.K."/>
        </authorList>
    </citation>
    <scope>SUBCELLULAR LOCATION [LARGE SCALE ANALYSIS]</scope>
</reference>
<reference key="5">
    <citation type="journal article" date="2003" name="Nature">
        <title>Global analysis of protein expression in yeast.</title>
        <authorList>
            <person name="Ghaemmaghami S."/>
            <person name="Huh W.-K."/>
            <person name="Bower K."/>
            <person name="Howson R.W."/>
            <person name="Belle A."/>
            <person name="Dephoure N."/>
            <person name="O'Shea E.K."/>
            <person name="Weissman J.S."/>
        </authorList>
    </citation>
    <scope>LEVEL OF PROTEIN EXPRESSION [LARGE SCALE ANALYSIS]</scope>
</reference>
<reference key="6">
    <citation type="journal article" date="2007" name="J. Proteome Res.">
        <title>Large-scale phosphorylation analysis of alpha-factor-arrested Saccharomyces cerevisiae.</title>
        <authorList>
            <person name="Li X."/>
            <person name="Gerber S.A."/>
            <person name="Rudner A.D."/>
            <person name="Beausoleil S.A."/>
            <person name="Haas W."/>
            <person name="Villen J."/>
            <person name="Elias J.E."/>
            <person name="Gygi S.P."/>
        </authorList>
    </citation>
    <scope>PHOSPHORYLATION [LARGE SCALE ANALYSIS] AT SER-209 AND SER-354</scope>
    <scope>IDENTIFICATION BY MASS SPECTROMETRY [LARGE SCALE ANALYSIS]</scope>
    <source>
        <strain>ADR376</strain>
    </source>
</reference>
<reference key="7">
    <citation type="journal article" date="2007" name="Proc. Natl. Acad. Sci. U.S.A.">
        <title>Analysis of phosphorylation sites on proteins from Saccharomyces cerevisiae by electron transfer dissociation (ETD) mass spectrometry.</title>
        <authorList>
            <person name="Chi A."/>
            <person name="Huttenhower C."/>
            <person name="Geer L.Y."/>
            <person name="Coon J.J."/>
            <person name="Syka J.E.P."/>
            <person name="Bai D.L."/>
            <person name="Shabanowitz J."/>
            <person name="Burke D.J."/>
            <person name="Troyanskaya O.G."/>
            <person name="Hunt D.F."/>
        </authorList>
    </citation>
    <scope>PHOSPHORYLATION [LARGE SCALE ANALYSIS] AT THR-391</scope>
    <scope>IDENTIFICATION BY MASS SPECTROMETRY [LARGE SCALE ANALYSIS]</scope>
</reference>
<reference key="8">
    <citation type="journal article" date="2008" name="Mol. Cell. Proteomics">
        <title>A multidimensional chromatography technology for in-depth phosphoproteome analysis.</title>
        <authorList>
            <person name="Albuquerque C.P."/>
            <person name="Smolka M.B."/>
            <person name="Payne S.H."/>
            <person name="Bafna V."/>
            <person name="Eng J."/>
            <person name="Zhou H."/>
        </authorList>
    </citation>
    <scope>PHOSPHORYLATION [LARGE SCALE ANALYSIS] AT SER-313</scope>
    <scope>IDENTIFICATION BY MASS SPECTROMETRY [LARGE SCALE ANALYSIS]</scope>
</reference>
<reference key="9">
    <citation type="journal article" date="2009" name="J. Cell Biol.">
        <title>Role of Inn1 and its interactions with Hof1 and Cyk3 in promoting cleavage furrow and septum formation in S. cerevisiae.</title>
        <authorList>
            <person name="Nishihama R."/>
            <person name="Schreiter J.H."/>
            <person name="Onishi M."/>
            <person name="Vallen E.A."/>
            <person name="Hanna J."/>
            <person name="Moravcevic K."/>
            <person name="Lippincott M.F."/>
            <person name="Han H."/>
            <person name="Lemmon M.A."/>
            <person name="Pringle J.R."/>
            <person name="Bi E."/>
        </authorList>
    </citation>
    <scope>SUBCELLULAR LOCATION</scope>
    <scope>FUNCTION</scope>
    <scope>INTERACTION WITH INN1</scope>
</reference>
<reference key="10">
    <citation type="journal article" date="2009" name="Mol. Genet. Genomics">
        <title>Cyk3 acts in actomyosin ring independent cytokinesis by recruiting Inn1 to the yeast bud neck.</title>
        <authorList>
            <person name="Jendretzki A."/>
            <person name="Ciklic I."/>
            <person name="Rodicio R."/>
            <person name="Schmitz H.P."/>
            <person name="Heinisch J.J."/>
        </authorList>
    </citation>
    <scope>SUBCELLULAR LOCATION</scope>
    <scope>FUNCTION</scope>
    <scope>INTERACTION WITH INN1</scope>
</reference>
<reference key="11">
    <citation type="journal article" date="2009" name="Science">
        <title>Global analysis of Cdk1 substrate phosphorylation sites provides insights into evolution.</title>
        <authorList>
            <person name="Holt L.J."/>
            <person name="Tuch B.B."/>
            <person name="Villen J."/>
            <person name="Johnson A.D."/>
            <person name="Gygi S.P."/>
            <person name="Morgan D.O."/>
        </authorList>
    </citation>
    <scope>PHOSPHORYLATION [LARGE SCALE ANALYSIS] AT SER-292 AND SER-313</scope>
    <scope>IDENTIFICATION BY MASS SPECTROMETRY [LARGE SCALE ANALYSIS]</scope>
</reference>